<reference key="1">
    <citation type="journal article" date="2009" name="J. Bacteriol.">
        <title>Complete genome sequence and comparative genome analysis of enteropathogenic Escherichia coli O127:H6 strain E2348/69.</title>
        <authorList>
            <person name="Iguchi A."/>
            <person name="Thomson N.R."/>
            <person name="Ogura Y."/>
            <person name="Saunders D."/>
            <person name="Ooka T."/>
            <person name="Henderson I.R."/>
            <person name="Harris D."/>
            <person name="Asadulghani M."/>
            <person name="Kurokawa K."/>
            <person name="Dean P."/>
            <person name="Kenny B."/>
            <person name="Quail M.A."/>
            <person name="Thurston S."/>
            <person name="Dougan G."/>
            <person name="Hayashi T."/>
            <person name="Parkhill J."/>
            <person name="Frankel G."/>
        </authorList>
    </citation>
    <scope>NUCLEOTIDE SEQUENCE [LARGE SCALE GENOMIC DNA]</scope>
    <source>
        <strain>E2348/69 / EPEC</strain>
    </source>
</reference>
<name>MURA_ECO27</name>
<gene>
    <name evidence="1" type="primary">murA</name>
    <name type="ordered locus">E2348C_3468</name>
</gene>
<accession>B7UJS9</accession>
<protein>
    <recommendedName>
        <fullName evidence="1">UDP-N-acetylglucosamine 1-carboxyvinyltransferase</fullName>
        <ecNumber evidence="1">2.5.1.7</ecNumber>
    </recommendedName>
    <alternativeName>
        <fullName evidence="1">Enoylpyruvate transferase</fullName>
    </alternativeName>
    <alternativeName>
        <fullName evidence="1">UDP-N-acetylglucosamine enolpyruvyl transferase</fullName>
        <shortName evidence="1">EPT</shortName>
    </alternativeName>
</protein>
<evidence type="ECO:0000255" key="1">
    <source>
        <dbReference type="HAMAP-Rule" id="MF_00111"/>
    </source>
</evidence>
<proteinExistence type="inferred from homology"/>
<sequence length="419" mass="44818">MDKFRVQGPTKLQGEVTISGAKNAALPILFAALLAEEPVEIQNVPKLKDVDTSMKLLSQLGAKVERNGSVHIDARDVNVFCAPYDLVKTMRASIWALGPLVARFGQGQVSLPGGCTIGARPVDLHISGLEQLGATIKLEEGYVKASVDGRLKGAHIVMDKVSVGATVTIMCAATLAEGTTIIENAAREPEIVDTANFLITLGAKISGQGTDRIVIEGVERLGGGVYRVLPDRIETGTFLVAAAISRGKIICRNAQPDTLDAVLAKLRDAGADIEVGEDWISLDMHGKRPKAVNVRTAPHPAFPTDMQAQFTLLNLVAEGTGFITETVFENRFMHVPELSRMGAHAEIESNTVICHGVEKLSGAQVMATDLRASASLVLAGCIAEGTTVVDRIYHIDRGYERIEDKLRALGANIERVKGE</sequence>
<dbReference type="EC" id="2.5.1.7" evidence="1"/>
<dbReference type="EMBL" id="FM180568">
    <property type="protein sequence ID" value="CAS11016.1"/>
    <property type="molecule type" value="Genomic_DNA"/>
</dbReference>
<dbReference type="RefSeq" id="WP_000357259.1">
    <property type="nucleotide sequence ID" value="NC_011601.1"/>
</dbReference>
<dbReference type="SMR" id="B7UJS9"/>
<dbReference type="GeneID" id="93778792"/>
<dbReference type="KEGG" id="ecg:E2348C_3468"/>
<dbReference type="HOGENOM" id="CLU_027387_0_0_6"/>
<dbReference type="UniPathway" id="UPA00219"/>
<dbReference type="Proteomes" id="UP000008205">
    <property type="component" value="Chromosome"/>
</dbReference>
<dbReference type="GO" id="GO:0005737">
    <property type="term" value="C:cytoplasm"/>
    <property type="evidence" value="ECO:0007669"/>
    <property type="project" value="UniProtKB-SubCell"/>
</dbReference>
<dbReference type="GO" id="GO:0008760">
    <property type="term" value="F:UDP-N-acetylglucosamine 1-carboxyvinyltransferase activity"/>
    <property type="evidence" value="ECO:0007669"/>
    <property type="project" value="UniProtKB-UniRule"/>
</dbReference>
<dbReference type="GO" id="GO:0051301">
    <property type="term" value="P:cell division"/>
    <property type="evidence" value="ECO:0007669"/>
    <property type="project" value="UniProtKB-KW"/>
</dbReference>
<dbReference type="GO" id="GO:0071555">
    <property type="term" value="P:cell wall organization"/>
    <property type="evidence" value="ECO:0007669"/>
    <property type="project" value="UniProtKB-KW"/>
</dbReference>
<dbReference type="GO" id="GO:0009252">
    <property type="term" value="P:peptidoglycan biosynthetic process"/>
    <property type="evidence" value="ECO:0007669"/>
    <property type="project" value="UniProtKB-UniRule"/>
</dbReference>
<dbReference type="GO" id="GO:0008360">
    <property type="term" value="P:regulation of cell shape"/>
    <property type="evidence" value="ECO:0007669"/>
    <property type="project" value="UniProtKB-KW"/>
</dbReference>
<dbReference type="GO" id="GO:0019277">
    <property type="term" value="P:UDP-N-acetylgalactosamine biosynthetic process"/>
    <property type="evidence" value="ECO:0007669"/>
    <property type="project" value="InterPro"/>
</dbReference>
<dbReference type="CDD" id="cd01555">
    <property type="entry name" value="UdpNAET"/>
    <property type="match status" value="1"/>
</dbReference>
<dbReference type="FunFam" id="3.65.10.10:FF:000002">
    <property type="entry name" value="UDP-N-acetylglucosamine 1-carboxyvinyltransferase"/>
    <property type="match status" value="1"/>
</dbReference>
<dbReference type="Gene3D" id="3.65.10.10">
    <property type="entry name" value="Enolpyruvate transferase domain"/>
    <property type="match status" value="2"/>
</dbReference>
<dbReference type="HAMAP" id="MF_00111">
    <property type="entry name" value="MurA"/>
    <property type="match status" value="1"/>
</dbReference>
<dbReference type="InterPro" id="IPR001986">
    <property type="entry name" value="Enolpyruvate_Tfrase_dom"/>
</dbReference>
<dbReference type="InterPro" id="IPR036968">
    <property type="entry name" value="Enolpyruvate_Tfrase_sf"/>
</dbReference>
<dbReference type="InterPro" id="IPR050068">
    <property type="entry name" value="MurA_subfamily"/>
</dbReference>
<dbReference type="InterPro" id="IPR013792">
    <property type="entry name" value="RNA3'P_cycl/enolpyr_Trfase_a/b"/>
</dbReference>
<dbReference type="InterPro" id="IPR005750">
    <property type="entry name" value="UDP_GlcNAc_COvinyl_MurA"/>
</dbReference>
<dbReference type="NCBIfam" id="TIGR01072">
    <property type="entry name" value="murA"/>
    <property type="match status" value="1"/>
</dbReference>
<dbReference type="NCBIfam" id="NF006873">
    <property type="entry name" value="PRK09369.1"/>
    <property type="match status" value="1"/>
</dbReference>
<dbReference type="PANTHER" id="PTHR43783">
    <property type="entry name" value="UDP-N-ACETYLGLUCOSAMINE 1-CARBOXYVINYLTRANSFERASE"/>
    <property type="match status" value="1"/>
</dbReference>
<dbReference type="PANTHER" id="PTHR43783:SF1">
    <property type="entry name" value="UDP-N-ACETYLGLUCOSAMINE 1-CARBOXYVINYLTRANSFERASE"/>
    <property type="match status" value="1"/>
</dbReference>
<dbReference type="Pfam" id="PF00275">
    <property type="entry name" value="EPSP_synthase"/>
    <property type="match status" value="1"/>
</dbReference>
<dbReference type="SUPFAM" id="SSF55205">
    <property type="entry name" value="EPT/RTPC-like"/>
    <property type="match status" value="1"/>
</dbReference>
<keyword id="KW-0131">Cell cycle</keyword>
<keyword id="KW-0132">Cell division</keyword>
<keyword id="KW-0133">Cell shape</keyword>
<keyword id="KW-0961">Cell wall biogenesis/degradation</keyword>
<keyword id="KW-0963">Cytoplasm</keyword>
<keyword id="KW-0573">Peptidoglycan synthesis</keyword>
<keyword id="KW-0670">Pyruvate</keyword>
<keyword id="KW-1185">Reference proteome</keyword>
<keyword id="KW-0808">Transferase</keyword>
<organism>
    <name type="scientific">Escherichia coli O127:H6 (strain E2348/69 / EPEC)</name>
    <dbReference type="NCBI Taxonomy" id="574521"/>
    <lineage>
        <taxon>Bacteria</taxon>
        <taxon>Pseudomonadati</taxon>
        <taxon>Pseudomonadota</taxon>
        <taxon>Gammaproteobacteria</taxon>
        <taxon>Enterobacterales</taxon>
        <taxon>Enterobacteriaceae</taxon>
        <taxon>Escherichia</taxon>
    </lineage>
</organism>
<feature type="chain" id="PRO_1000192083" description="UDP-N-acetylglucosamine 1-carboxyvinyltransferase">
    <location>
        <begin position="1"/>
        <end position="419"/>
    </location>
</feature>
<feature type="active site" description="Proton donor" evidence="1">
    <location>
        <position position="115"/>
    </location>
</feature>
<feature type="binding site" evidence="1">
    <location>
        <begin position="22"/>
        <end position="23"/>
    </location>
    <ligand>
        <name>phosphoenolpyruvate</name>
        <dbReference type="ChEBI" id="CHEBI:58702"/>
    </ligand>
</feature>
<feature type="binding site" evidence="1">
    <location>
        <position position="91"/>
    </location>
    <ligand>
        <name>UDP-N-acetyl-alpha-D-glucosamine</name>
        <dbReference type="ChEBI" id="CHEBI:57705"/>
    </ligand>
</feature>
<feature type="binding site" evidence="1">
    <location>
        <begin position="120"/>
        <end position="124"/>
    </location>
    <ligand>
        <name>UDP-N-acetyl-alpha-D-glucosamine</name>
        <dbReference type="ChEBI" id="CHEBI:57705"/>
    </ligand>
</feature>
<feature type="binding site" evidence="1">
    <location>
        <begin position="160"/>
        <end position="163"/>
    </location>
    <ligand>
        <name>UDP-N-acetyl-alpha-D-glucosamine</name>
        <dbReference type="ChEBI" id="CHEBI:57705"/>
    </ligand>
</feature>
<feature type="binding site" evidence="1">
    <location>
        <position position="305"/>
    </location>
    <ligand>
        <name>UDP-N-acetyl-alpha-D-glucosamine</name>
        <dbReference type="ChEBI" id="CHEBI:57705"/>
    </ligand>
</feature>
<feature type="binding site" evidence="1">
    <location>
        <position position="327"/>
    </location>
    <ligand>
        <name>UDP-N-acetyl-alpha-D-glucosamine</name>
        <dbReference type="ChEBI" id="CHEBI:57705"/>
    </ligand>
</feature>
<feature type="modified residue" description="2-(S-cysteinyl)pyruvic acid O-phosphothioketal" evidence="1">
    <location>
        <position position="115"/>
    </location>
</feature>
<comment type="function">
    <text evidence="1">Cell wall formation. Adds enolpyruvyl to UDP-N-acetylglucosamine.</text>
</comment>
<comment type="catalytic activity">
    <reaction evidence="1">
        <text>phosphoenolpyruvate + UDP-N-acetyl-alpha-D-glucosamine = UDP-N-acetyl-3-O-(1-carboxyvinyl)-alpha-D-glucosamine + phosphate</text>
        <dbReference type="Rhea" id="RHEA:18681"/>
        <dbReference type="ChEBI" id="CHEBI:43474"/>
        <dbReference type="ChEBI" id="CHEBI:57705"/>
        <dbReference type="ChEBI" id="CHEBI:58702"/>
        <dbReference type="ChEBI" id="CHEBI:68483"/>
        <dbReference type="EC" id="2.5.1.7"/>
    </reaction>
</comment>
<comment type="pathway">
    <text evidence="1">Cell wall biogenesis; peptidoglycan biosynthesis.</text>
</comment>
<comment type="subcellular location">
    <subcellularLocation>
        <location evidence="1">Cytoplasm</location>
    </subcellularLocation>
</comment>
<comment type="similarity">
    <text evidence="1">Belongs to the EPSP synthase family. MurA subfamily.</text>
</comment>